<feature type="chain" id="PRO_0000163915" description="tRNA dimethylallyltransferase">
    <location>
        <begin position="1"/>
        <end position="316"/>
    </location>
</feature>
<feature type="region of interest" description="Interaction with substrate tRNA" evidence="1">
    <location>
        <begin position="42"/>
        <end position="45"/>
    </location>
</feature>
<feature type="region of interest" description="Interaction with substrate tRNA" evidence="1">
    <location>
        <begin position="166"/>
        <end position="170"/>
    </location>
</feature>
<feature type="region of interest" description="Interaction with substrate tRNA" evidence="1">
    <location>
        <begin position="247"/>
        <end position="252"/>
    </location>
</feature>
<feature type="region of interest" description="Interaction with substrate tRNA" evidence="1">
    <location>
        <begin position="280"/>
        <end position="287"/>
    </location>
</feature>
<feature type="binding site" evidence="1">
    <location>
        <begin position="17"/>
        <end position="24"/>
    </location>
    <ligand>
        <name>ATP</name>
        <dbReference type="ChEBI" id="CHEBI:30616"/>
    </ligand>
</feature>
<feature type="binding site" evidence="1">
    <location>
        <begin position="19"/>
        <end position="24"/>
    </location>
    <ligand>
        <name>substrate</name>
    </ligand>
</feature>
<feature type="site" description="Interaction with substrate tRNA" evidence="1">
    <location>
        <position position="108"/>
    </location>
</feature>
<feature type="site" description="Interaction with substrate tRNA" evidence="1">
    <location>
        <position position="130"/>
    </location>
</feature>
<sequence length="316" mass="35007">MSDISKASLPKAIFLMGPTASGKTALAIELRKILPVELISVDSALIYKGMDIGTAKPNAEELLAAPHRLLDIRDPSQAYSAADFRRDALAEMADITAAGRIPLLVGGTMLYFKALLEGLSPLPSADPEVRARIEQQAAEQGWESLHRQLQEIDPVAAARIHPNDPQRLSRALEVFFISGKTLTELTQTSGDALPYQVHQFAIAPASRELLHQRIEQRFHQMLASGFEAEVRALFARGDLHTDLPSIRCVGYRQMWSYLGGEISYDEMVYRGVCATRQLAKRQITWLRGWEGVHWLDSEKPEQARDEVLQVVGAIAG</sequence>
<protein>
    <recommendedName>
        <fullName evidence="1">tRNA dimethylallyltransferase</fullName>
        <ecNumber evidence="1">2.5.1.75</ecNumber>
    </recommendedName>
    <alternativeName>
        <fullName evidence="1">Dimethylallyl diphosphate:tRNA dimethylallyltransferase</fullName>
        <shortName evidence="1">DMAPP:tRNA dimethylallyltransferase</shortName>
        <shortName evidence="1">DMATase</shortName>
    </alternativeName>
    <alternativeName>
        <fullName evidence="1">Isopentenyl-diphosphate:tRNA isopentenyltransferase</fullName>
        <shortName evidence="1">IPP transferase</shortName>
        <shortName evidence="1">IPPT</shortName>
        <shortName evidence="1">IPTase</shortName>
    </alternativeName>
</protein>
<organism>
    <name type="scientific">Escherichia coli O157:H7</name>
    <dbReference type="NCBI Taxonomy" id="83334"/>
    <lineage>
        <taxon>Bacteria</taxon>
        <taxon>Pseudomonadati</taxon>
        <taxon>Pseudomonadota</taxon>
        <taxon>Gammaproteobacteria</taxon>
        <taxon>Enterobacterales</taxon>
        <taxon>Enterobacteriaceae</taxon>
        <taxon>Escherichia</taxon>
    </lineage>
</organism>
<accession>Q8XDN3</accession>
<keyword id="KW-0067">ATP-binding</keyword>
<keyword id="KW-0460">Magnesium</keyword>
<keyword id="KW-0547">Nucleotide-binding</keyword>
<keyword id="KW-1185">Reference proteome</keyword>
<keyword id="KW-0808">Transferase</keyword>
<keyword id="KW-0819">tRNA processing</keyword>
<reference key="1">
    <citation type="journal article" date="2001" name="Nature">
        <title>Genome sequence of enterohaemorrhagic Escherichia coli O157:H7.</title>
        <authorList>
            <person name="Perna N.T."/>
            <person name="Plunkett G. III"/>
            <person name="Burland V."/>
            <person name="Mau B."/>
            <person name="Glasner J.D."/>
            <person name="Rose D.J."/>
            <person name="Mayhew G.F."/>
            <person name="Evans P.S."/>
            <person name="Gregor J."/>
            <person name="Kirkpatrick H.A."/>
            <person name="Posfai G."/>
            <person name="Hackett J."/>
            <person name="Klink S."/>
            <person name="Boutin A."/>
            <person name="Shao Y."/>
            <person name="Miller L."/>
            <person name="Grotbeck E.J."/>
            <person name="Davis N.W."/>
            <person name="Lim A."/>
            <person name="Dimalanta E.T."/>
            <person name="Potamousis K."/>
            <person name="Apodaca J."/>
            <person name="Anantharaman T.S."/>
            <person name="Lin J."/>
            <person name="Yen G."/>
            <person name="Schwartz D.C."/>
            <person name="Welch R.A."/>
            <person name="Blattner F.R."/>
        </authorList>
    </citation>
    <scope>NUCLEOTIDE SEQUENCE [LARGE SCALE GENOMIC DNA]</scope>
    <source>
        <strain>O157:H7 / EDL933 / ATCC 700927 / EHEC</strain>
    </source>
</reference>
<reference key="2">
    <citation type="journal article" date="2001" name="DNA Res.">
        <title>Complete genome sequence of enterohemorrhagic Escherichia coli O157:H7 and genomic comparison with a laboratory strain K-12.</title>
        <authorList>
            <person name="Hayashi T."/>
            <person name="Makino K."/>
            <person name="Ohnishi M."/>
            <person name="Kurokawa K."/>
            <person name="Ishii K."/>
            <person name="Yokoyama K."/>
            <person name="Han C.-G."/>
            <person name="Ohtsubo E."/>
            <person name="Nakayama K."/>
            <person name="Murata T."/>
            <person name="Tanaka M."/>
            <person name="Tobe T."/>
            <person name="Iida T."/>
            <person name="Takami H."/>
            <person name="Honda T."/>
            <person name="Sasakawa C."/>
            <person name="Ogasawara N."/>
            <person name="Yasunaga T."/>
            <person name="Kuhara S."/>
            <person name="Shiba T."/>
            <person name="Hattori M."/>
            <person name="Shinagawa H."/>
        </authorList>
    </citation>
    <scope>NUCLEOTIDE SEQUENCE [LARGE SCALE GENOMIC DNA]</scope>
    <source>
        <strain>O157:H7 / Sakai / RIMD 0509952 / EHEC</strain>
    </source>
</reference>
<proteinExistence type="inferred from homology"/>
<name>MIAA_ECO57</name>
<gene>
    <name evidence="1" type="primary">miaA</name>
    <name type="ordered locus">Z5778</name>
    <name type="ordered locus">ECs5147</name>
</gene>
<comment type="function">
    <text evidence="1">Catalyzes the transfer of a dimethylallyl group onto the adenine at position 37 in tRNAs that read codons beginning with uridine, leading to the formation of N6-(dimethylallyl)adenosine (i(6)A).</text>
</comment>
<comment type="catalytic activity">
    <reaction evidence="1">
        <text>adenosine(37) in tRNA + dimethylallyl diphosphate = N(6)-dimethylallyladenosine(37) in tRNA + diphosphate</text>
        <dbReference type="Rhea" id="RHEA:26482"/>
        <dbReference type="Rhea" id="RHEA-COMP:10162"/>
        <dbReference type="Rhea" id="RHEA-COMP:10375"/>
        <dbReference type="ChEBI" id="CHEBI:33019"/>
        <dbReference type="ChEBI" id="CHEBI:57623"/>
        <dbReference type="ChEBI" id="CHEBI:74411"/>
        <dbReference type="ChEBI" id="CHEBI:74415"/>
        <dbReference type="EC" id="2.5.1.75"/>
    </reaction>
</comment>
<comment type="cofactor">
    <cofactor evidence="1">
        <name>Mg(2+)</name>
        <dbReference type="ChEBI" id="CHEBI:18420"/>
    </cofactor>
</comment>
<comment type="subunit">
    <text evidence="1">Monomer.</text>
</comment>
<comment type="similarity">
    <text evidence="1">Belongs to the IPP transferase family.</text>
</comment>
<evidence type="ECO:0000255" key="1">
    <source>
        <dbReference type="HAMAP-Rule" id="MF_00185"/>
    </source>
</evidence>
<dbReference type="EC" id="2.5.1.75" evidence="1"/>
<dbReference type="EMBL" id="AE005174">
    <property type="protein sequence ID" value="AAG59367.1"/>
    <property type="molecule type" value="Genomic_DNA"/>
</dbReference>
<dbReference type="EMBL" id="BA000007">
    <property type="protein sequence ID" value="BAB38570.1"/>
    <property type="molecule type" value="Genomic_DNA"/>
</dbReference>
<dbReference type="PIR" id="C86113">
    <property type="entry name" value="C86113"/>
</dbReference>
<dbReference type="PIR" id="C91272">
    <property type="entry name" value="C91272"/>
</dbReference>
<dbReference type="RefSeq" id="NP_313174.1">
    <property type="nucleotide sequence ID" value="NC_002695.1"/>
</dbReference>
<dbReference type="RefSeq" id="WP_001280341.1">
    <property type="nucleotide sequence ID" value="NZ_VOAI01000008.1"/>
</dbReference>
<dbReference type="SMR" id="Q8XDN3"/>
<dbReference type="STRING" id="155864.Z5778"/>
<dbReference type="GeneID" id="914072"/>
<dbReference type="KEGG" id="ece:Z5778"/>
<dbReference type="KEGG" id="ecs:ECs_5147"/>
<dbReference type="PATRIC" id="fig|386585.9.peg.5380"/>
<dbReference type="eggNOG" id="COG0324">
    <property type="taxonomic scope" value="Bacteria"/>
</dbReference>
<dbReference type="HOGENOM" id="CLU_032616_0_0_6"/>
<dbReference type="OMA" id="VPHYLID"/>
<dbReference type="Proteomes" id="UP000000558">
    <property type="component" value="Chromosome"/>
</dbReference>
<dbReference type="Proteomes" id="UP000002519">
    <property type="component" value="Chromosome"/>
</dbReference>
<dbReference type="GO" id="GO:0005524">
    <property type="term" value="F:ATP binding"/>
    <property type="evidence" value="ECO:0007669"/>
    <property type="project" value="UniProtKB-UniRule"/>
</dbReference>
<dbReference type="GO" id="GO:0052381">
    <property type="term" value="F:tRNA dimethylallyltransferase activity"/>
    <property type="evidence" value="ECO:0007669"/>
    <property type="project" value="UniProtKB-UniRule"/>
</dbReference>
<dbReference type="GO" id="GO:0006400">
    <property type="term" value="P:tRNA modification"/>
    <property type="evidence" value="ECO:0007669"/>
    <property type="project" value="TreeGrafter"/>
</dbReference>
<dbReference type="FunFam" id="1.10.20.140:FF:000001">
    <property type="entry name" value="tRNA dimethylallyltransferase"/>
    <property type="match status" value="1"/>
</dbReference>
<dbReference type="FunFam" id="1.10.287.890:FF:000001">
    <property type="entry name" value="tRNA dimethylallyltransferase"/>
    <property type="match status" value="1"/>
</dbReference>
<dbReference type="Gene3D" id="1.10.20.140">
    <property type="match status" value="1"/>
</dbReference>
<dbReference type="Gene3D" id="1.10.287.890">
    <property type="entry name" value="Crystal structure of tRNA isopentenylpyrophosphate transferase (bh2366) domain"/>
    <property type="match status" value="1"/>
</dbReference>
<dbReference type="Gene3D" id="3.40.50.300">
    <property type="entry name" value="P-loop containing nucleotide triphosphate hydrolases"/>
    <property type="match status" value="1"/>
</dbReference>
<dbReference type="HAMAP" id="MF_00185">
    <property type="entry name" value="IPP_trans"/>
    <property type="match status" value="1"/>
</dbReference>
<dbReference type="InterPro" id="IPR039657">
    <property type="entry name" value="Dimethylallyltransferase"/>
</dbReference>
<dbReference type="InterPro" id="IPR018022">
    <property type="entry name" value="IPT"/>
</dbReference>
<dbReference type="InterPro" id="IPR027417">
    <property type="entry name" value="P-loop_NTPase"/>
</dbReference>
<dbReference type="NCBIfam" id="TIGR00174">
    <property type="entry name" value="miaA"/>
    <property type="match status" value="1"/>
</dbReference>
<dbReference type="PANTHER" id="PTHR11088">
    <property type="entry name" value="TRNA DIMETHYLALLYLTRANSFERASE"/>
    <property type="match status" value="1"/>
</dbReference>
<dbReference type="PANTHER" id="PTHR11088:SF60">
    <property type="entry name" value="TRNA DIMETHYLALLYLTRANSFERASE"/>
    <property type="match status" value="1"/>
</dbReference>
<dbReference type="Pfam" id="PF01715">
    <property type="entry name" value="IPPT"/>
    <property type="match status" value="1"/>
</dbReference>
<dbReference type="SUPFAM" id="SSF52540">
    <property type="entry name" value="P-loop containing nucleoside triphosphate hydrolases"/>
    <property type="match status" value="1"/>
</dbReference>